<evidence type="ECO:0000255" key="1"/>
<evidence type="ECO:0000269" key="2">
    <source>
    </source>
</evidence>
<evidence type="ECO:0000269" key="3">
    <source>
    </source>
</evidence>
<evidence type="ECO:0000305" key="4"/>
<keyword id="KW-0903">Direct protein sequencing</keyword>
<keyword id="KW-0964">Secreted</keyword>
<keyword id="KW-0732">Signal</keyword>
<proteinExistence type="evidence at protein level"/>
<organism>
    <name type="scientific">Pinctada maxima</name>
    <name type="common">Silver-lipped pearl oyster</name>
    <name type="synonym">White-lipped pearl oyster</name>
    <dbReference type="NCBI Taxonomy" id="104660"/>
    <lineage>
        <taxon>Eukaryota</taxon>
        <taxon>Metazoa</taxon>
        <taxon>Spiralia</taxon>
        <taxon>Lophotrochozoa</taxon>
        <taxon>Mollusca</taxon>
        <taxon>Bivalvia</taxon>
        <taxon>Autobranchia</taxon>
        <taxon>Pteriomorphia</taxon>
        <taxon>Pterioida</taxon>
        <taxon>Pterioidea</taxon>
        <taxon>Pteriidae</taxon>
        <taxon>Pinctada</taxon>
    </lineage>
</organism>
<accession>P86951</accession>
<feature type="signal peptide" evidence="1">
    <location>
        <begin position="1"/>
        <end position="16"/>
    </location>
</feature>
<feature type="chain" id="PRO_0000413086" description="Shematrin-like protein 3" evidence="1">
    <location>
        <begin position="17"/>
        <end position="343"/>
    </location>
</feature>
<feature type="sequence conflict" description="In Ref. 1; GT279728." evidence="4" ref="1">
    <original>G</original>
    <variation>V</variation>
    <location>
        <position position="149"/>
    </location>
</feature>
<feature type="sequence conflict" description="In Ref. 1; GT279081." evidence="4" ref="1">
    <original>G</original>
    <variation>R</variation>
    <location>
        <position position="165"/>
    </location>
</feature>
<feature type="sequence conflict" description="In Ref. 1; GT281300." evidence="4" ref="1">
    <original>S</original>
    <variation>N</variation>
    <location>
        <position position="192"/>
    </location>
</feature>
<name>SLP3_PINMA</name>
<reference evidence="4" key="1">
    <citation type="journal article" date="2010" name="Mol. Biol. Evol.">
        <title>Parallel evolution of nacre building gene sets in molluscs.</title>
        <authorList>
            <person name="Jackson D.J."/>
            <person name="McDougall C."/>
            <person name="Woodcroft B."/>
            <person name="Moase P."/>
            <person name="Rose R.A."/>
            <person name="Kube M."/>
            <person name="Reinhardt R."/>
            <person name="Rokhsar D.S."/>
            <person name="Montagnani C."/>
            <person name="Joubert C."/>
            <person name="Piquemal D."/>
            <person name="Degnan B.M."/>
        </authorList>
    </citation>
    <scope>NUCLEOTIDE SEQUENCE [MRNA]</scope>
    <scope>IDENTIFICATION</scope>
    <source>
        <tissue evidence="2">Mantle</tissue>
    </source>
</reference>
<reference key="2">
    <citation type="journal article" date="2012" name="Proc. Natl. Acad. Sci. U.S.A.">
        <title>Different secretory repertoires control the biomineralization processes of prism and nacre deposition of the pearl oyster shell.</title>
        <authorList>
            <person name="Marie B."/>
            <person name="Joubert C."/>
            <person name="Tayale A."/>
            <person name="Zanella-Cleon I."/>
            <person name="Belliard C."/>
            <person name="Piquemal D."/>
            <person name="Cochennec-Laureau N."/>
            <person name="Marin F."/>
            <person name="Gueguen Y."/>
            <person name="Montagnani C."/>
        </authorList>
    </citation>
    <scope>PROTEIN SEQUENCE OF 98-130</scope>
    <scope>SUBCELLULAR LOCATION</scope>
    <scope>TISSUE SPECIFICITY</scope>
    <source>
        <tissue>Shell</tissue>
    </source>
</reference>
<comment type="subcellular location">
    <subcellularLocation>
        <location evidence="3">Secreted</location>
    </subcellularLocation>
</comment>
<comment type="tissue specificity">
    <text evidence="3">Prismatic layer of shell (at protein level).</text>
</comment>
<dbReference type="EMBL" id="GT279033">
    <property type="status" value="NOT_ANNOTATED_CDS"/>
    <property type="molecule type" value="mRNA"/>
</dbReference>
<dbReference type="EMBL" id="GT279081">
    <property type="status" value="NOT_ANNOTATED_CDS"/>
    <property type="molecule type" value="mRNA"/>
</dbReference>
<dbReference type="EMBL" id="GT279728">
    <property type="status" value="NOT_ANNOTATED_CDS"/>
    <property type="molecule type" value="mRNA"/>
</dbReference>
<dbReference type="EMBL" id="GT281300">
    <property type="status" value="NOT_ANNOTATED_CDS"/>
    <property type="molecule type" value="mRNA"/>
</dbReference>
<dbReference type="EMBL" id="GT281620">
    <property type="status" value="NOT_ANNOTATED_CDS"/>
    <property type="molecule type" value="mRNA"/>
</dbReference>
<dbReference type="EMBL" id="GT284145">
    <property type="status" value="NOT_ANNOTATED_CDS"/>
    <property type="molecule type" value="mRNA"/>
</dbReference>
<dbReference type="EMBL" id="EZ420249">
    <property type="status" value="NOT_ANNOTATED_CDS"/>
    <property type="molecule type" value="mRNA"/>
</dbReference>
<dbReference type="GO" id="GO:0005576">
    <property type="term" value="C:extracellular region"/>
    <property type="evidence" value="ECO:0007669"/>
    <property type="project" value="UniProtKB-SubCell"/>
</dbReference>
<dbReference type="InterPro" id="IPR011004">
    <property type="entry name" value="Trimer_LpxA-like_sf"/>
</dbReference>
<dbReference type="SUPFAM" id="SSF51161">
    <property type="entry name" value="Trimeric LpxA-like enzymes"/>
    <property type="match status" value="1"/>
</dbReference>
<protein>
    <recommendedName>
        <fullName>Shematrin-like protein 3</fullName>
    </recommendedName>
</protein>
<sequence>MLKLVCAVVLIATVNAKGSSPGFGIGQLPGITVVSGGVSGGSLSGGVSGGSLSGGIYGGYPRLYGGFGPGGVYGSINSFGGVNTNAYGLYGTSPAVRGAAQGAAATSVLGILSGVPSRISGYSVGTGGGRAFVSGSATPIGGLPYGGYGYGGYGYGGYGGYGYGGYGYPDIAYYGGSTYGNIASGVISSPTSGVSLPYGGILGLYGGYGGYGSGYGGYGMGSAYSIGNYLSGHGGYYGGSYPSYGSTLTGVSQSLSFGRAIMSGQAFGAGVPAFGSVNFGNFGVGTGGIGILGGGGVIGSGGVIGGGGVIGGGGVVGGGAVIGGGGVIGGGVPTGGIIRKKKY</sequence>